<name>Y1796_SYNY3</name>
<keyword id="KW-0472">Membrane</keyword>
<keyword id="KW-1185">Reference proteome</keyword>
<keyword id="KW-0793">Thylakoid</keyword>
<keyword id="KW-0812">Transmembrane</keyword>
<keyword id="KW-1133">Transmembrane helix</keyword>
<comment type="subcellular location">
    <subcellularLocation>
        <location evidence="2">Cellular thylakoid membrane</location>
        <topology evidence="2">Single-pass membrane protein</topology>
    </subcellularLocation>
</comment>
<proteinExistence type="predicted"/>
<evidence type="ECO:0000255" key="1"/>
<evidence type="ECO:0000269" key="2">
    <source>
    </source>
</evidence>
<sequence length="201" mass="22969">MIMSVCLPWLARCRRFLIVSLAFAMLLLGIWGTLPFSLSDHGTAIAALEDDRYDGNIFVVYAGNGSLVPPRLNLRESFERKLPVILVYYLDDSKDCKQYAFIVSRMQEFYGRVASIIPVSVDSIPDQKRFRRDEPGYYYSGGVPQTVILDKSGKKIFDAQGALKFEVVDDVLRDLFDLLPRSESMELKQRTYNEFNSELVD</sequence>
<reference key="1">
    <citation type="journal article" date="1996" name="DNA Res.">
        <title>Sequence analysis of the genome of the unicellular cyanobacterium Synechocystis sp. strain PCC6803. II. Sequence determination of the entire genome and assignment of potential protein-coding regions.</title>
        <authorList>
            <person name="Kaneko T."/>
            <person name="Sato S."/>
            <person name="Kotani H."/>
            <person name="Tanaka A."/>
            <person name="Asamizu E."/>
            <person name="Nakamura Y."/>
            <person name="Miyajima N."/>
            <person name="Hirosawa M."/>
            <person name="Sugiura M."/>
            <person name="Sasamoto S."/>
            <person name="Kimura T."/>
            <person name="Hosouchi T."/>
            <person name="Matsuno A."/>
            <person name="Muraki A."/>
            <person name="Nakazaki N."/>
            <person name="Naruo K."/>
            <person name="Okumura S."/>
            <person name="Shimpo S."/>
            <person name="Takeuchi C."/>
            <person name="Wada T."/>
            <person name="Watanabe A."/>
            <person name="Yamada M."/>
            <person name="Yasuda M."/>
            <person name="Tabata S."/>
        </authorList>
    </citation>
    <scope>NUCLEOTIDE SEQUENCE [LARGE SCALE GENOMIC DNA]</scope>
    <source>
        <strain>ATCC 27184 / PCC 6803 / Kazusa</strain>
    </source>
</reference>
<reference key="2">
    <citation type="journal article" date="2005" name="Proteomics">
        <title>Proteomic studies of the thylakoid membrane of Synechocystis sp. PCC 6803.</title>
        <authorList>
            <person name="Srivastava R."/>
            <person name="Pisareva T."/>
            <person name="Norling B."/>
        </authorList>
    </citation>
    <scope>SUBCELLULAR LOCATION IN THYLAKOID</scope>
</reference>
<accession>P72804</accession>
<dbReference type="EMBL" id="BA000022">
    <property type="protein sequence ID" value="BAA16819.1"/>
    <property type="molecule type" value="Genomic_DNA"/>
</dbReference>
<dbReference type="PIR" id="S74667">
    <property type="entry name" value="S74667"/>
</dbReference>
<dbReference type="SMR" id="P72804"/>
<dbReference type="STRING" id="1148.gene:10497676"/>
<dbReference type="PaxDb" id="1148-1651892"/>
<dbReference type="EnsemblBacteria" id="BAA16819">
    <property type="protein sequence ID" value="BAA16819"/>
    <property type="gene ID" value="BAA16819"/>
</dbReference>
<dbReference type="KEGG" id="syn:slr1796"/>
<dbReference type="eggNOG" id="COG0526">
    <property type="taxonomic scope" value="Bacteria"/>
</dbReference>
<dbReference type="InParanoid" id="P72804"/>
<dbReference type="Proteomes" id="UP000001425">
    <property type="component" value="Chromosome"/>
</dbReference>
<dbReference type="GO" id="GO:0031676">
    <property type="term" value="C:plasma membrane-derived thylakoid membrane"/>
    <property type="evidence" value="ECO:0007669"/>
    <property type="project" value="UniProtKB-SubCell"/>
</dbReference>
<dbReference type="Gene3D" id="3.40.30.10">
    <property type="entry name" value="Glutaredoxin"/>
    <property type="match status" value="1"/>
</dbReference>
<dbReference type="InterPro" id="IPR036249">
    <property type="entry name" value="Thioredoxin-like_sf"/>
</dbReference>
<dbReference type="InterPro" id="IPR048069">
    <property type="entry name" value="Thylak_slr1796"/>
</dbReference>
<dbReference type="NCBIfam" id="NF038096">
    <property type="entry name" value="thylak_slr1796"/>
    <property type="match status" value="1"/>
</dbReference>
<dbReference type="SUPFAM" id="SSF52833">
    <property type="entry name" value="Thioredoxin-like"/>
    <property type="match status" value="1"/>
</dbReference>
<protein>
    <recommendedName>
        <fullName>Thylakoid membrane protein slr1796</fullName>
    </recommendedName>
</protein>
<organism>
    <name type="scientific">Synechocystis sp. (strain ATCC 27184 / PCC 6803 / Kazusa)</name>
    <dbReference type="NCBI Taxonomy" id="1111708"/>
    <lineage>
        <taxon>Bacteria</taxon>
        <taxon>Bacillati</taxon>
        <taxon>Cyanobacteriota</taxon>
        <taxon>Cyanophyceae</taxon>
        <taxon>Synechococcales</taxon>
        <taxon>Merismopediaceae</taxon>
        <taxon>Synechocystis</taxon>
    </lineage>
</organism>
<gene>
    <name type="ordered locus">slr1796</name>
</gene>
<feature type="chain" id="PRO_0000352742" description="Thylakoid membrane protein slr1796">
    <location>
        <begin position="1"/>
        <end position="201"/>
    </location>
</feature>
<feature type="transmembrane region" description="Helical" evidence="1">
    <location>
        <begin position="16"/>
        <end position="36"/>
    </location>
</feature>